<feature type="chain" id="PRO_1000087701" description="Ribosomal RNA large subunit methyltransferase E">
    <location>
        <begin position="1"/>
        <end position="207"/>
    </location>
</feature>
<feature type="active site" description="Proton acceptor" evidence="1">
    <location>
        <position position="162"/>
    </location>
</feature>
<feature type="binding site" evidence="1">
    <location>
        <position position="61"/>
    </location>
    <ligand>
        <name>S-adenosyl-L-methionine</name>
        <dbReference type="ChEBI" id="CHEBI:59789"/>
    </ligand>
</feature>
<feature type="binding site" evidence="1">
    <location>
        <position position="63"/>
    </location>
    <ligand>
        <name>S-adenosyl-L-methionine</name>
        <dbReference type="ChEBI" id="CHEBI:59789"/>
    </ligand>
</feature>
<feature type="binding site" evidence="1">
    <location>
        <position position="81"/>
    </location>
    <ligand>
        <name>S-adenosyl-L-methionine</name>
        <dbReference type="ChEBI" id="CHEBI:59789"/>
    </ligand>
</feature>
<feature type="binding site" evidence="1">
    <location>
        <position position="97"/>
    </location>
    <ligand>
        <name>S-adenosyl-L-methionine</name>
        <dbReference type="ChEBI" id="CHEBI:59789"/>
    </ligand>
</feature>
<feature type="binding site" evidence="1">
    <location>
        <position position="122"/>
    </location>
    <ligand>
        <name>S-adenosyl-L-methionine</name>
        <dbReference type="ChEBI" id="CHEBI:59789"/>
    </ligand>
</feature>
<keyword id="KW-0963">Cytoplasm</keyword>
<keyword id="KW-0489">Methyltransferase</keyword>
<keyword id="KW-0698">rRNA processing</keyword>
<keyword id="KW-0949">S-adenosyl-L-methionine</keyword>
<keyword id="KW-0808">Transferase</keyword>
<accession>A5W995</accession>
<sequence>MVQRSKSSANWLREHFNDPFVKQAQKDGYRSRASYKLLEIQEKDRLIRPGMSVIDLGAAPGGWSQVTSRLIGGQGRLIASDILEMDSIADVTFIQGDFTHDEVLQRILEAVGDSHVDLVISDMAPNMSGTPAVDIPRAMFLCELALDLATRVLKPGGDFLIKIFQGEGFDVYLKDVRSKFDKVQMRKPSSSRDRSREQYLLGRGFKG</sequence>
<comment type="function">
    <text evidence="1">Specifically methylates the uridine in position 2552 of 23S rRNA at the 2'-O position of the ribose in the fully assembled 50S ribosomal subunit.</text>
</comment>
<comment type="catalytic activity">
    <reaction evidence="1">
        <text>uridine(2552) in 23S rRNA + S-adenosyl-L-methionine = 2'-O-methyluridine(2552) in 23S rRNA + S-adenosyl-L-homocysteine + H(+)</text>
        <dbReference type="Rhea" id="RHEA:42720"/>
        <dbReference type="Rhea" id="RHEA-COMP:10202"/>
        <dbReference type="Rhea" id="RHEA-COMP:10203"/>
        <dbReference type="ChEBI" id="CHEBI:15378"/>
        <dbReference type="ChEBI" id="CHEBI:57856"/>
        <dbReference type="ChEBI" id="CHEBI:59789"/>
        <dbReference type="ChEBI" id="CHEBI:65315"/>
        <dbReference type="ChEBI" id="CHEBI:74478"/>
        <dbReference type="EC" id="2.1.1.166"/>
    </reaction>
</comment>
<comment type="subcellular location">
    <subcellularLocation>
        <location evidence="1">Cytoplasm</location>
    </subcellularLocation>
</comment>
<comment type="similarity">
    <text evidence="1">Belongs to the class I-like SAM-binding methyltransferase superfamily. RNA methyltransferase RlmE family.</text>
</comment>
<dbReference type="EC" id="2.1.1.166" evidence="1"/>
<dbReference type="EMBL" id="CP000712">
    <property type="protein sequence ID" value="ABQ80705.1"/>
    <property type="molecule type" value="Genomic_DNA"/>
</dbReference>
<dbReference type="SMR" id="A5W995"/>
<dbReference type="KEGG" id="ppf:Pput_4585"/>
<dbReference type="eggNOG" id="COG0293">
    <property type="taxonomic scope" value="Bacteria"/>
</dbReference>
<dbReference type="HOGENOM" id="CLU_009422_4_0_6"/>
<dbReference type="GO" id="GO:0005737">
    <property type="term" value="C:cytoplasm"/>
    <property type="evidence" value="ECO:0007669"/>
    <property type="project" value="UniProtKB-SubCell"/>
</dbReference>
<dbReference type="GO" id="GO:0008650">
    <property type="term" value="F:rRNA (uridine-2'-O-)-methyltransferase activity"/>
    <property type="evidence" value="ECO:0007669"/>
    <property type="project" value="UniProtKB-UniRule"/>
</dbReference>
<dbReference type="FunFam" id="3.40.50.150:FF:000005">
    <property type="entry name" value="Ribosomal RNA large subunit methyltransferase E"/>
    <property type="match status" value="1"/>
</dbReference>
<dbReference type="Gene3D" id="3.40.50.150">
    <property type="entry name" value="Vaccinia Virus protein VP39"/>
    <property type="match status" value="1"/>
</dbReference>
<dbReference type="HAMAP" id="MF_01547">
    <property type="entry name" value="RNA_methyltr_E"/>
    <property type="match status" value="1"/>
</dbReference>
<dbReference type="InterPro" id="IPR050082">
    <property type="entry name" value="RNA_methyltr_RlmE"/>
</dbReference>
<dbReference type="InterPro" id="IPR002877">
    <property type="entry name" value="RNA_MeTrfase_FtsJ_dom"/>
</dbReference>
<dbReference type="InterPro" id="IPR015507">
    <property type="entry name" value="rRNA-MeTfrase_E"/>
</dbReference>
<dbReference type="InterPro" id="IPR029063">
    <property type="entry name" value="SAM-dependent_MTases_sf"/>
</dbReference>
<dbReference type="NCBIfam" id="NF008390">
    <property type="entry name" value="PRK11188.1"/>
    <property type="match status" value="1"/>
</dbReference>
<dbReference type="PANTHER" id="PTHR10920">
    <property type="entry name" value="RIBOSOMAL RNA METHYLTRANSFERASE"/>
    <property type="match status" value="1"/>
</dbReference>
<dbReference type="PANTHER" id="PTHR10920:SF18">
    <property type="entry name" value="RRNA METHYLTRANSFERASE 2, MITOCHONDRIAL"/>
    <property type="match status" value="1"/>
</dbReference>
<dbReference type="Pfam" id="PF01728">
    <property type="entry name" value="FtsJ"/>
    <property type="match status" value="1"/>
</dbReference>
<dbReference type="PIRSF" id="PIRSF005461">
    <property type="entry name" value="23S_rRNA_mtase"/>
    <property type="match status" value="1"/>
</dbReference>
<dbReference type="SUPFAM" id="SSF53335">
    <property type="entry name" value="S-adenosyl-L-methionine-dependent methyltransferases"/>
    <property type="match status" value="1"/>
</dbReference>
<proteinExistence type="inferred from homology"/>
<reference key="1">
    <citation type="submission" date="2007-05" db="EMBL/GenBank/DDBJ databases">
        <title>Complete sequence of Pseudomonas putida F1.</title>
        <authorList>
            <consortium name="US DOE Joint Genome Institute"/>
            <person name="Copeland A."/>
            <person name="Lucas S."/>
            <person name="Lapidus A."/>
            <person name="Barry K."/>
            <person name="Detter J.C."/>
            <person name="Glavina del Rio T."/>
            <person name="Hammon N."/>
            <person name="Israni S."/>
            <person name="Dalin E."/>
            <person name="Tice H."/>
            <person name="Pitluck S."/>
            <person name="Chain P."/>
            <person name="Malfatti S."/>
            <person name="Shin M."/>
            <person name="Vergez L."/>
            <person name="Schmutz J."/>
            <person name="Larimer F."/>
            <person name="Land M."/>
            <person name="Hauser L."/>
            <person name="Kyrpides N."/>
            <person name="Lykidis A."/>
            <person name="Parales R."/>
            <person name="Richardson P."/>
        </authorList>
    </citation>
    <scope>NUCLEOTIDE SEQUENCE [LARGE SCALE GENOMIC DNA]</scope>
    <source>
        <strain>ATCC 700007 / DSM 6899 / JCM 31910 / BCRC 17059 / LMG 24140 / F1</strain>
    </source>
</reference>
<evidence type="ECO:0000255" key="1">
    <source>
        <dbReference type="HAMAP-Rule" id="MF_01547"/>
    </source>
</evidence>
<name>RLME_PSEP1</name>
<protein>
    <recommendedName>
        <fullName evidence="1">Ribosomal RNA large subunit methyltransferase E</fullName>
        <ecNumber evidence="1">2.1.1.166</ecNumber>
    </recommendedName>
    <alternativeName>
        <fullName evidence="1">23S rRNA Um2552 methyltransferase</fullName>
    </alternativeName>
    <alternativeName>
        <fullName evidence="1">rRNA (uridine-2'-O-)-methyltransferase</fullName>
    </alternativeName>
</protein>
<organism>
    <name type="scientific">Pseudomonas putida (strain ATCC 700007 / DSM 6899 / JCM 31910 / BCRC 17059 / LMG 24140 / F1)</name>
    <dbReference type="NCBI Taxonomy" id="351746"/>
    <lineage>
        <taxon>Bacteria</taxon>
        <taxon>Pseudomonadati</taxon>
        <taxon>Pseudomonadota</taxon>
        <taxon>Gammaproteobacteria</taxon>
        <taxon>Pseudomonadales</taxon>
        <taxon>Pseudomonadaceae</taxon>
        <taxon>Pseudomonas</taxon>
    </lineage>
</organism>
<gene>
    <name evidence="1" type="primary">rlmE</name>
    <name evidence="1" type="synonym">ftsJ</name>
    <name evidence="1" type="synonym">rrmJ</name>
    <name type="ordered locus">Pput_4585</name>
</gene>